<proteinExistence type="inferred from homology"/>
<name>Y884_STRPQ</name>
<accession>P0DG95</accession>
<accession>P67364</accession>
<accession>Q99ZF8</accession>
<feature type="chain" id="PRO_0000411637" description="UPF0223 protein SPs1084">
    <location>
        <begin position="1"/>
        <end position="92"/>
    </location>
</feature>
<organism>
    <name type="scientific">Streptococcus pyogenes serotype M3 (strain SSI-1)</name>
    <dbReference type="NCBI Taxonomy" id="193567"/>
    <lineage>
        <taxon>Bacteria</taxon>
        <taxon>Bacillati</taxon>
        <taxon>Bacillota</taxon>
        <taxon>Bacilli</taxon>
        <taxon>Lactobacillales</taxon>
        <taxon>Streptococcaceae</taxon>
        <taxon>Streptococcus</taxon>
    </lineage>
</organism>
<reference key="1">
    <citation type="journal article" date="2003" name="Genome Res.">
        <title>Genome sequence of an M3 strain of Streptococcus pyogenes reveals a large-scale genomic rearrangement in invasive strains and new insights into phage evolution.</title>
        <authorList>
            <person name="Nakagawa I."/>
            <person name="Kurokawa K."/>
            <person name="Yamashita A."/>
            <person name="Nakata M."/>
            <person name="Tomiyasu Y."/>
            <person name="Okahashi N."/>
            <person name="Kawabata S."/>
            <person name="Yamazaki K."/>
            <person name="Shiba T."/>
            <person name="Yasunaga T."/>
            <person name="Hayashi H."/>
            <person name="Hattori M."/>
            <person name="Hamada S."/>
        </authorList>
    </citation>
    <scope>NUCLEOTIDE SEQUENCE [LARGE SCALE GENOMIC DNA]</scope>
    <source>
        <strain>SSI-1</strain>
    </source>
</reference>
<comment type="similarity">
    <text evidence="1">Belongs to the UPF0223 family.</text>
</comment>
<protein>
    <recommendedName>
        <fullName evidence="1">UPF0223 protein SPs1084</fullName>
    </recommendedName>
</protein>
<evidence type="ECO:0000255" key="1">
    <source>
        <dbReference type="HAMAP-Rule" id="MF_01041"/>
    </source>
</evidence>
<dbReference type="EMBL" id="BA000034">
    <property type="protein sequence ID" value="BAC64179.1"/>
    <property type="molecule type" value="Genomic_DNA"/>
</dbReference>
<dbReference type="RefSeq" id="WP_002984497.1">
    <property type="nucleotide sequence ID" value="NC_004606.1"/>
</dbReference>
<dbReference type="SMR" id="P0DG95"/>
<dbReference type="KEGG" id="sps:SPs1084"/>
<dbReference type="HOGENOM" id="CLU_166693_0_0_9"/>
<dbReference type="Gene3D" id="1.10.220.80">
    <property type="entry name" value="BH2638-like"/>
    <property type="match status" value="1"/>
</dbReference>
<dbReference type="HAMAP" id="MF_01041">
    <property type="entry name" value="UPF0223"/>
    <property type="match status" value="1"/>
</dbReference>
<dbReference type="InterPro" id="IPR023324">
    <property type="entry name" value="BH2638-like_sf"/>
</dbReference>
<dbReference type="InterPro" id="IPR007920">
    <property type="entry name" value="UPF0223"/>
</dbReference>
<dbReference type="NCBIfam" id="NF003353">
    <property type="entry name" value="PRK04387.1"/>
    <property type="match status" value="1"/>
</dbReference>
<dbReference type="Pfam" id="PF05256">
    <property type="entry name" value="UPF0223"/>
    <property type="match status" value="1"/>
</dbReference>
<dbReference type="PIRSF" id="PIRSF037260">
    <property type="entry name" value="UPF0223"/>
    <property type="match status" value="1"/>
</dbReference>
<dbReference type="SUPFAM" id="SSF158504">
    <property type="entry name" value="BH2638-like"/>
    <property type="match status" value="1"/>
</dbReference>
<sequence>MSGNYYYPLDLSWSTEEISSVLHFLNKVELAYEKKVDAKQLLDSYKTYKTIVKSKAQEKQIDRDFQKVSGYSTYQVVKKAKAIEKGFFSLGN</sequence>
<gene>
    <name type="ordered locus">SPs1084</name>
</gene>